<evidence type="ECO:0000255" key="1">
    <source>
        <dbReference type="HAMAP-Rule" id="MF_01416"/>
    </source>
</evidence>
<dbReference type="EMBL" id="EU912438">
    <property type="protein sequence ID" value="ACF70883.1"/>
    <property type="molecule type" value="Genomic_DNA"/>
</dbReference>
<dbReference type="RefSeq" id="YP_002327466.1">
    <property type="nucleotide sequence ID" value="NC_011600.1"/>
</dbReference>
<dbReference type="SMR" id="B7T1R7"/>
<dbReference type="GeneID" id="7055974"/>
<dbReference type="GO" id="GO:0009535">
    <property type="term" value="C:chloroplast thylakoid membrane"/>
    <property type="evidence" value="ECO:0007669"/>
    <property type="project" value="UniProtKB-SubCell"/>
</dbReference>
<dbReference type="GO" id="GO:0045259">
    <property type="term" value="C:proton-transporting ATP synthase complex"/>
    <property type="evidence" value="ECO:0007669"/>
    <property type="project" value="UniProtKB-KW"/>
</dbReference>
<dbReference type="GO" id="GO:0046933">
    <property type="term" value="F:proton-transporting ATP synthase activity, rotational mechanism"/>
    <property type="evidence" value="ECO:0007669"/>
    <property type="project" value="UniProtKB-UniRule"/>
</dbReference>
<dbReference type="Gene3D" id="1.10.520.20">
    <property type="entry name" value="N-terminal domain of the delta subunit of the F1F0-ATP synthase"/>
    <property type="match status" value="1"/>
</dbReference>
<dbReference type="HAMAP" id="MF_01416">
    <property type="entry name" value="ATP_synth_delta_bact"/>
    <property type="match status" value="1"/>
</dbReference>
<dbReference type="InterPro" id="IPR026015">
    <property type="entry name" value="ATP_synth_OSCP/delta_N_sf"/>
</dbReference>
<dbReference type="InterPro" id="IPR020781">
    <property type="entry name" value="ATPase_OSCP/d_CS"/>
</dbReference>
<dbReference type="InterPro" id="IPR000711">
    <property type="entry name" value="ATPase_OSCP/dsu"/>
</dbReference>
<dbReference type="NCBIfam" id="TIGR01145">
    <property type="entry name" value="ATP_synt_delta"/>
    <property type="match status" value="1"/>
</dbReference>
<dbReference type="PANTHER" id="PTHR11910">
    <property type="entry name" value="ATP SYNTHASE DELTA CHAIN"/>
    <property type="match status" value="1"/>
</dbReference>
<dbReference type="Pfam" id="PF00213">
    <property type="entry name" value="OSCP"/>
    <property type="match status" value="1"/>
</dbReference>
<dbReference type="PRINTS" id="PR00125">
    <property type="entry name" value="ATPASEDELTA"/>
</dbReference>
<dbReference type="SUPFAM" id="SSF47928">
    <property type="entry name" value="N-terminal domain of the delta subunit of the F1F0-ATP synthase"/>
    <property type="match status" value="1"/>
</dbReference>
<dbReference type="PROSITE" id="PS00389">
    <property type="entry name" value="ATPASE_DELTA"/>
    <property type="match status" value="1"/>
</dbReference>
<gene>
    <name evidence="1" type="primary">atpD</name>
</gene>
<reference key="1">
    <citation type="journal article" date="2008" name="Proc. Natl. Acad. Sci. U.S.A.">
        <title>Horizontal gene transfer of the algal nuclear gene psbO to the photosynthetic sea slug Elysia chlorotica.</title>
        <authorList>
            <person name="Rumpho M.E."/>
            <person name="Worful J.M."/>
            <person name="Lee J."/>
            <person name="Kannan K."/>
            <person name="Tyler M.S."/>
            <person name="Bhattacharya D."/>
            <person name="Moustafa A."/>
            <person name="Manhart J.R."/>
        </authorList>
    </citation>
    <scope>NUCLEOTIDE SEQUENCE [LARGE SCALE GENOMIC DNA]</scope>
    <source>
        <strain>CCMP2940</strain>
    </source>
</reference>
<accession>B7T1R7</accession>
<feature type="chain" id="PRO_0000371217" description="ATP synthase subunit delta, chloroplastic">
    <location>
        <begin position="1"/>
        <end position="201"/>
    </location>
</feature>
<organism>
    <name type="scientific">Vaucheria litorea</name>
    <name type="common">Yellow-green alga</name>
    <dbReference type="NCBI Taxonomy" id="109269"/>
    <lineage>
        <taxon>Eukaryota</taxon>
        <taxon>Sar</taxon>
        <taxon>Stramenopiles</taxon>
        <taxon>Ochrophyta</taxon>
        <taxon>PX clade</taxon>
        <taxon>Xanthophyceae</taxon>
        <taxon>Vaucheriales</taxon>
        <taxon>Vaucheriaceae</taxon>
        <taxon>Vaucheria</taxon>
    </lineage>
</organism>
<sequence>MTNKLLSIKIADPYAEAFFQLSLSLYIKNNDPDLFYQLIFDIQDFLKLLKETPELDNFLKNPLNSNILKKNILNKIIENKFNLQTINFLNLLIDKKRIDTIQTIGKIFLEKAYEFVCIKFVEVWSTIELSQKQQENLIQKINILLGPIFSEPSVQFYKIQLTLMLDTNLLGGLIIKMGSKIIDLSLRNELQQLGKKLDITI</sequence>
<comment type="function">
    <text evidence="1">F(1)F(0) ATP synthase produces ATP from ADP in the presence of a proton or sodium gradient. F-type ATPases consist of two structural domains, F(1) containing the extramembraneous catalytic core and F(0) containing the membrane proton channel, linked together by a central stalk and a peripheral stalk. During catalysis, ATP synthesis in the catalytic domain of F(1) is coupled via a rotary mechanism of the central stalk subunits to proton translocation.</text>
</comment>
<comment type="function">
    <text evidence="1">This protein is part of the stalk that links CF(0) to CF(1). It either transmits conformational changes from CF(0) to CF(1) or is implicated in proton conduction.</text>
</comment>
<comment type="subunit">
    <text evidence="1">F-type ATPases have 2 components, F(1) - the catalytic core - and F(0) - the membrane proton channel. F(1) has five subunits: alpha(3), beta(3), gamma(1), delta(1), epsilon(1). CF(0) has four main subunits: a(1), b(1), b'(1) and c(10-14). The alpha and beta chains form an alternating ring which encloses part of the gamma chain. F(1) is attached to F(0) by a central stalk formed by the gamma and epsilon chains, while a peripheral stalk is formed by the delta, b and b' chains.</text>
</comment>
<comment type="subcellular location">
    <subcellularLocation>
        <location evidence="1">Plastid</location>
        <location evidence="1">Chloroplast thylakoid membrane</location>
        <topology evidence="1">Peripheral membrane protein</topology>
    </subcellularLocation>
</comment>
<comment type="similarity">
    <text evidence="1">Belongs to the ATPase delta chain family.</text>
</comment>
<name>ATPD_VAULI</name>
<keyword id="KW-0066">ATP synthesis</keyword>
<keyword id="KW-0139">CF(1)</keyword>
<keyword id="KW-0150">Chloroplast</keyword>
<keyword id="KW-0375">Hydrogen ion transport</keyword>
<keyword id="KW-0406">Ion transport</keyword>
<keyword id="KW-0472">Membrane</keyword>
<keyword id="KW-0934">Plastid</keyword>
<keyword id="KW-0793">Thylakoid</keyword>
<keyword id="KW-0813">Transport</keyword>
<geneLocation type="chloroplast"/>
<proteinExistence type="inferred from homology"/>
<protein>
    <recommendedName>
        <fullName evidence="1">ATP synthase subunit delta, chloroplastic</fullName>
    </recommendedName>
    <alternativeName>
        <fullName evidence="1">ATP synthase F(1) sector subunit delta</fullName>
    </alternativeName>
    <alternativeName>
        <fullName evidence="1">F-type ATPase subunit delta</fullName>
    </alternativeName>
</protein>